<reference key="1">
    <citation type="submission" date="2009-07" db="EMBL/GenBank/DDBJ databases">
        <title>Complete sequence of Pectobacterium carotovorum subsp. carotovorum PC1.</title>
        <authorList>
            <consortium name="US DOE Joint Genome Institute"/>
            <person name="Lucas S."/>
            <person name="Copeland A."/>
            <person name="Lapidus A."/>
            <person name="Glavina del Rio T."/>
            <person name="Tice H."/>
            <person name="Bruce D."/>
            <person name="Goodwin L."/>
            <person name="Pitluck S."/>
            <person name="Munk A.C."/>
            <person name="Brettin T."/>
            <person name="Detter J.C."/>
            <person name="Han C."/>
            <person name="Tapia R."/>
            <person name="Larimer F."/>
            <person name="Land M."/>
            <person name="Hauser L."/>
            <person name="Kyrpides N."/>
            <person name="Mikhailova N."/>
            <person name="Balakrishnan V."/>
            <person name="Glasner J."/>
            <person name="Perna N.T."/>
        </authorList>
    </citation>
    <scope>NUCLEOTIDE SEQUENCE [LARGE SCALE GENOMIC DNA]</scope>
    <source>
        <strain>PC1</strain>
    </source>
</reference>
<proteinExistence type="inferred from homology"/>
<gene>
    <name evidence="1" type="primary">murA</name>
    <name type="ordered locus">PC1_0287</name>
</gene>
<evidence type="ECO:0000255" key="1">
    <source>
        <dbReference type="HAMAP-Rule" id="MF_00111"/>
    </source>
</evidence>
<dbReference type="EC" id="2.5.1.7" evidence="1"/>
<dbReference type="EMBL" id="CP001657">
    <property type="protein sequence ID" value="ACT11346.1"/>
    <property type="molecule type" value="Genomic_DNA"/>
</dbReference>
<dbReference type="RefSeq" id="WP_012773007.1">
    <property type="nucleotide sequence ID" value="NC_012917.1"/>
</dbReference>
<dbReference type="SMR" id="C6DIP6"/>
<dbReference type="STRING" id="561230.PC1_0287"/>
<dbReference type="GeneID" id="67795917"/>
<dbReference type="KEGG" id="pct:PC1_0287"/>
<dbReference type="eggNOG" id="COG0766">
    <property type="taxonomic scope" value="Bacteria"/>
</dbReference>
<dbReference type="HOGENOM" id="CLU_027387_0_0_6"/>
<dbReference type="OrthoDB" id="9803760at2"/>
<dbReference type="UniPathway" id="UPA00219"/>
<dbReference type="Proteomes" id="UP000002736">
    <property type="component" value="Chromosome"/>
</dbReference>
<dbReference type="GO" id="GO:0005737">
    <property type="term" value="C:cytoplasm"/>
    <property type="evidence" value="ECO:0007669"/>
    <property type="project" value="UniProtKB-SubCell"/>
</dbReference>
<dbReference type="GO" id="GO:0008760">
    <property type="term" value="F:UDP-N-acetylglucosamine 1-carboxyvinyltransferase activity"/>
    <property type="evidence" value="ECO:0007669"/>
    <property type="project" value="UniProtKB-UniRule"/>
</dbReference>
<dbReference type="GO" id="GO:0051301">
    <property type="term" value="P:cell division"/>
    <property type="evidence" value="ECO:0007669"/>
    <property type="project" value="UniProtKB-KW"/>
</dbReference>
<dbReference type="GO" id="GO:0071555">
    <property type="term" value="P:cell wall organization"/>
    <property type="evidence" value="ECO:0007669"/>
    <property type="project" value="UniProtKB-KW"/>
</dbReference>
<dbReference type="GO" id="GO:0009252">
    <property type="term" value="P:peptidoglycan biosynthetic process"/>
    <property type="evidence" value="ECO:0007669"/>
    <property type="project" value="UniProtKB-UniRule"/>
</dbReference>
<dbReference type="GO" id="GO:0008360">
    <property type="term" value="P:regulation of cell shape"/>
    <property type="evidence" value="ECO:0007669"/>
    <property type="project" value="UniProtKB-KW"/>
</dbReference>
<dbReference type="GO" id="GO:0019277">
    <property type="term" value="P:UDP-N-acetylgalactosamine biosynthetic process"/>
    <property type="evidence" value="ECO:0007669"/>
    <property type="project" value="InterPro"/>
</dbReference>
<dbReference type="CDD" id="cd01555">
    <property type="entry name" value="UdpNAET"/>
    <property type="match status" value="1"/>
</dbReference>
<dbReference type="FunFam" id="3.65.10.10:FF:000002">
    <property type="entry name" value="UDP-N-acetylglucosamine 1-carboxyvinyltransferase"/>
    <property type="match status" value="1"/>
</dbReference>
<dbReference type="Gene3D" id="3.65.10.10">
    <property type="entry name" value="Enolpyruvate transferase domain"/>
    <property type="match status" value="2"/>
</dbReference>
<dbReference type="HAMAP" id="MF_00111">
    <property type="entry name" value="MurA"/>
    <property type="match status" value="1"/>
</dbReference>
<dbReference type="InterPro" id="IPR001986">
    <property type="entry name" value="Enolpyruvate_Tfrase_dom"/>
</dbReference>
<dbReference type="InterPro" id="IPR036968">
    <property type="entry name" value="Enolpyruvate_Tfrase_sf"/>
</dbReference>
<dbReference type="InterPro" id="IPR050068">
    <property type="entry name" value="MurA_subfamily"/>
</dbReference>
<dbReference type="InterPro" id="IPR013792">
    <property type="entry name" value="RNA3'P_cycl/enolpyr_Trfase_a/b"/>
</dbReference>
<dbReference type="InterPro" id="IPR005750">
    <property type="entry name" value="UDP_GlcNAc_COvinyl_MurA"/>
</dbReference>
<dbReference type="NCBIfam" id="TIGR01072">
    <property type="entry name" value="murA"/>
    <property type="match status" value="1"/>
</dbReference>
<dbReference type="NCBIfam" id="NF006873">
    <property type="entry name" value="PRK09369.1"/>
    <property type="match status" value="1"/>
</dbReference>
<dbReference type="PANTHER" id="PTHR43783">
    <property type="entry name" value="UDP-N-ACETYLGLUCOSAMINE 1-CARBOXYVINYLTRANSFERASE"/>
    <property type="match status" value="1"/>
</dbReference>
<dbReference type="PANTHER" id="PTHR43783:SF1">
    <property type="entry name" value="UDP-N-ACETYLGLUCOSAMINE 1-CARBOXYVINYLTRANSFERASE"/>
    <property type="match status" value="1"/>
</dbReference>
<dbReference type="Pfam" id="PF00275">
    <property type="entry name" value="EPSP_synthase"/>
    <property type="match status" value="1"/>
</dbReference>
<dbReference type="SUPFAM" id="SSF55205">
    <property type="entry name" value="EPT/RTPC-like"/>
    <property type="match status" value="1"/>
</dbReference>
<sequence length="420" mass="44870">MDKFRVQGPTRLAGEVTISGAKNAALPILFAALLAEEPVEIQNVPKLRDIDTTMKLLGQLGARVERNGSVHVDASNVNVFCAPYDLVKTMRASIWALGPLVARFGQGQVSLPGGCAIGARPVDLHIYGLEQLGAQIVLEEGYVKATVDGRLKGAHIVMDKVSVGATVTIMSAATLAEGTTIIENAAREPEIVDTANFLNTLGAKISGAGSDKITIEGVARLGGGVYRVVPDRIETGTFLVAAAVSRGQIICRNTRPDTLDAVLAKLREAGAEIEIGEDWISLDMHGKRPKAVTVRTSPHPGFPTDMQAQFSLLNLVAEGTGVITETIFENRFMHVPELIRMGAQAEIESNTVICHGVDKLSGAQVMATDLRASASLVLAGCIAEGVTIVDRIYHIDRGYDRIEDKLRALGANIERVKEHE</sequence>
<protein>
    <recommendedName>
        <fullName evidence="1">UDP-N-acetylglucosamine 1-carboxyvinyltransferase</fullName>
        <ecNumber evidence="1">2.5.1.7</ecNumber>
    </recommendedName>
    <alternativeName>
        <fullName evidence="1">Enoylpyruvate transferase</fullName>
    </alternativeName>
    <alternativeName>
        <fullName evidence="1">UDP-N-acetylglucosamine enolpyruvyl transferase</fullName>
        <shortName evidence="1">EPT</shortName>
    </alternativeName>
</protein>
<organism>
    <name type="scientific">Pectobacterium carotovorum subsp. carotovorum (strain PC1)</name>
    <dbReference type="NCBI Taxonomy" id="561230"/>
    <lineage>
        <taxon>Bacteria</taxon>
        <taxon>Pseudomonadati</taxon>
        <taxon>Pseudomonadota</taxon>
        <taxon>Gammaproteobacteria</taxon>
        <taxon>Enterobacterales</taxon>
        <taxon>Pectobacteriaceae</taxon>
        <taxon>Pectobacterium</taxon>
    </lineage>
</organism>
<comment type="function">
    <text evidence="1">Cell wall formation. Adds enolpyruvyl to UDP-N-acetylglucosamine.</text>
</comment>
<comment type="catalytic activity">
    <reaction evidence="1">
        <text>phosphoenolpyruvate + UDP-N-acetyl-alpha-D-glucosamine = UDP-N-acetyl-3-O-(1-carboxyvinyl)-alpha-D-glucosamine + phosphate</text>
        <dbReference type="Rhea" id="RHEA:18681"/>
        <dbReference type="ChEBI" id="CHEBI:43474"/>
        <dbReference type="ChEBI" id="CHEBI:57705"/>
        <dbReference type="ChEBI" id="CHEBI:58702"/>
        <dbReference type="ChEBI" id="CHEBI:68483"/>
        <dbReference type="EC" id="2.5.1.7"/>
    </reaction>
</comment>
<comment type="pathway">
    <text evidence="1">Cell wall biogenesis; peptidoglycan biosynthesis.</text>
</comment>
<comment type="subcellular location">
    <subcellularLocation>
        <location evidence="1">Cytoplasm</location>
    </subcellularLocation>
</comment>
<comment type="similarity">
    <text evidence="1">Belongs to the EPSP synthase family. MurA subfamily.</text>
</comment>
<accession>C6DIP6</accession>
<keyword id="KW-0131">Cell cycle</keyword>
<keyword id="KW-0132">Cell division</keyword>
<keyword id="KW-0133">Cell shape</keyword>
<keyword id="KW-0961">Cell wall biogenesis/degradation</keyword>
<keyword id="KW-0963">Cytoplasm</keyword>
<keyword id="KW-0573">Peptidoglycan synthesis</keyword>
<keyword id="KW-0670">Pyruvate</keyword>
<keyword id="KW-0808">Transferase</keyword>
<feature type="chain" id="PRO_1000202931" description="UDP-N-acetylglucosamine 1-carboxyvinyltransferase">
    <location>
        <begin position="1"/>
        <end position="420"/>
    </location>
</feature>
<feature type="active site" description="Proton donor" evidence="1">
    <location>
        <position position="115"/>
    </location>
</feature>
<feature type="binding site" evidence="1">
    <location>
        <begin position="22"/>
        <end position="23"/>
    </location>
    <ligand>
        <name>phosphoenolpyruvate</name>
        <dbReference type="ChEBI" id="CHEBI:58702"/>
    </ligand>
</feature>
<feature type="binding site" evidence="1">
    <location>
        <position position="91"/>
    </location>
    <ligand>
        <name>UDP-N-acetyl-alpha-D-glucosamine</name>
        <dbReference type="ChEBI" id="CHEBI:57705"/>
    </ligand>
</feature>
<feature type="binding site" evidence="1">
    <location>
        <begin position="120"/>
        <end position="124"/>
    </location>
    <ligand>
        <name>UDP-N-acetyl-alpha-D-glucosamine</name>
        <dbReference type="ChEBI" id="CHEBI:57705"/>
    </ligand>
</feature>
<feature type="binding site" evidence="1">
    <location>
        <begin position="160"/>
        <end position="163"/>
    </location>
    <ligand>
        <name>UDP-N-acetyl-alpha-D-glucosamine</name>
        <dbReference type="ChEBI" id="CHEBI:57705"/>
    </ligand>
</feature>
<feature type="binding site" evidence="1">
    <location>
        <position position="305"/>
    </location>
    <ligand>
        <name>UDP-N-acetyl-alpha-D-glucosamine</name>
        <dbReference type="ChEBI" id="CHEBI:57705"/>
    </ligand>
</feature>
<feature type="binding site" evidence="1">
    <location>
        <position position="327"/>
    </location>
    <ligand>
        <name>UDP-N-acetyl-alpha-D-glucosamine</name>
        <dbReference type="ChEBI" id="CHEBI:57705"/>
    </ligand>
</feature>
<feature type="modified residue" description="2-(S-cysteinyl)pyruvic acid O-phosphothioketal" evidence="1">
    <location>
        <position position="115"/>
    </location>
</feature>
<name>MURA_PECCP</name>